<sequence length="519" mass="56471">MVRFAWRRRASLRATSSLSLRWRVMLLAMSMVAMVVVLMAFAVYVVISAALYSDIDNQLQSRAQLLIASGSLAADPGKAIEGTAYSDVNAMLVNPGHSIYTANQPGQTLPVGTAEKAVIRGELFMSQRTASDQRILAIHLPNDSSLLISKSLRPTEAVMTKLRWVLLIVGSLGVAVAAVAGGMVTRAGLRPVGRLTEAAERVARTDDLRPIPVFGSDELARLTEAFNLMLRALAESRERQARLVTDAGHELRTPLTSLRTNVELLIASMAPEAPRLPDQEMADLRADVLAQIEELSTLVGDLVDLTRDDAGQVVHEPIDMSEVLYRSLERVRRRRNDIHFDVQAIGWQIYGDAAGLSRAVLNLMDNAAKWSPSGGRVVVTMRQFDPSHVELVVSDYGPGIPPQERRLVFERFYRSTTARSLPGSGLGLAIVKQVVINHGGLLRVEDTAPGVQPPGTSIYVLLPGRPMPVSAYSTLADQDMGEANFQDKIGPAVQVSGKSANFRDSAHVISVDYQSARAR</sequence>
<proteinExistence type="inferred from homology"/>
<dbReference type="EC" id="2.7.13.3"/>
<dbReference type="EC" id="3.1.3.-"/>
<dbReference type="EMBL" id="AL035500">
    <property type="protein sequence ID" value="CAB36689.1"/>
    <property type="molecule type" value="Genomic_DNA"/>
</dbReference>
<dbReference type="EMBL" id="AL583917">
    <property type="protein sequence ID" value="CAC29683.1"/>
    <property type="molecule type" value="Genomic_DNA"/>
</dbReference>
<dbReference type="PIR" id="T45447">
    <property type="entry name" value="T45447"/>
</dbReference>
<dbReference type="RefSeq" id="NP_301251.1">
    <property type="nucleotide sequence ID" value="NC_002677.1"/>
</dbReference>
<dbReference type="RefSeq" id="WP_010907576.1">
    <property type="nucleotide sequence ID" value="NC_002677.1"/>
</dbReference>
<dbReference type="SMR" id="Q9Z5G7"/>
<dbReference type="STRING" id="272631.gene:17573990"/>
<dbReference type="KEGG" id="mle:ML0175"/>
<dbReference type="PATRIC" id="fig|272631.5.peg.280"/>
<dbReference type="Leproma" id="ML0175"/>
<dbReference type="eggNOG" id="COG0642">
    <property type="taxonomic scope" value="Bacteria"/>
</dbReference>
<dbReference type="eggNOG" id="COG3850">
    <property type="taxonomic scope" value="Bacteria"/>
</dbReference>
<dbReference type="HOGENOM" id="CLU_000445_89_6_11"/>
<dbReference type="OrthoDB" id="9786919at2"/>
<dbReference type="Proteomes" id="UP000000806">
    <property type="component" value="Chromosome"/>
</dbReference>
<dbReference type="GO" id="GO:0005886">
    <property type="term" value="C:plasma membrane"/>
    <property type="evidence" value="ECO:0007669"/>
    <property type="project" value="UniProtKB-SubCell"/>
</dbReference>
<dbReference type="GO" id="GO:0005524">
    <property type="term" value="F:ATP binding"/>
    <property type="evidence" value="ECO:0007669"/>
    <property type="project" value="UniProtKB-KW"/>
</dbReference>
<dbReference type="GO" id="GO:0004721">
    <property type="term" value="F:phosphoprotein phosphatase activity"/>
    <property type="evidence" value="ECO:0007669"/>
    <property type="project" value="UniProtKB-KW"/>
</dbReference>
<dbReference type="GO" id="GO:0000155">
    <property type="term" value="F:phosphorelay sensor kinase activity"/>
    <property type="evidence" value="ECO:0007669"/>
    <property type="project" value="InterPro"/>
</dbReference>
<dbReference type="CDD" id="cd06225">
    <property type="entry name" value="HAMP"/>
    <property type="match status" value="1"/>
</dbReference>
<dbReference type="CDD" id="cd00075">
    <property type="entry name" value="HATPase"/>
    <property type="match status" value="1"/>
</dbReference>
<dbReference type="CDD" id="cd00082">
    <property type="entry name" value="HisKA"/>
    <property type="match status" value="1"/>
</dbReference>
<dbReference type="FunFam" id="3.30.565.10:FF:000066">
    <property type="entry name" value="Two-component sensor kinase MprB"/>
    <property type="match status" value="1"/>
</dbReference>
<dbReference type="Gene3D" id="1.10.287.130">
    <property type="match status" value="1"/>
</dbReference>
<dbReference type="Gene3D" id="6.10.340.10">
    <property type="match status" value="1"/>
</dbReference>
<dbReference type="Gene3D" id="3.30.565.10">
    <property type="entry name" value="Histidine kinase-like ATPase, C-terminal domain"/>
    <property type="match status" value="1"/>
</dbReference>
<dbReference type="InterPro" id="IPR050980">
    <property type="entry name" value="2C_sensor_his_kinase"/>
</dbReference>
<dbReference type="InterPro" id="IPR003660">
    <property type="entry name" value="HAMP_dom"/>
</dbReference>
<dbReference type="InterPro" id="IPR036890">
    <property type="entry name" value="HATPase_C_sf"/>
</dbReference>
<dbReference type="InterPro" id="IPR005467">
    <property type="entry name" value="His_kinase_dom"/>
</dbReference>
<dbReference type="InterPro" id="IPR003661">
    <property type="entry name" value="HisK_dim/P_dom"/>
</dbReference>
<dbReference type="InterPro" id="IPR036097">
    <property type="entry name" value="HisK_dim/P_sf"/>
</dbReference>
<dbReference type="InterPro" id="IPR004358">
    <property type="entry name" value="Sig_transdc_His_kin-like_C"/>
</dbReference>
<dbReference type="PANTHER" id="PTHR44936">
    <property type="entry name" value="SENSOR PROTEIN CREC"/>
    <property type="match status" value="1"/>
</dbReference>
<dbReference type="PANTHER" id="PTHR44936:SF9">
    <property type="entry name" value="SENSOR PROTEIN CREC"/>
    <property type="match status" value="1"/>
</dbReference>
<dbReference type="Pfam" id="PF00672">
    <property type="entry name" value="HAMP"/>
    <property type="match status" value="1"/>
</dbReference>
<dbReference type="Pfam" id="PF02518">
    <property type="entry name" value="HATPase_c"/>
    <property type="match status" value="1"/>
</dbReference>
<dbReference type="Pfam" id="PF00512">
    <property type="entry name" value="HisKA"/>
    <property type="match status" value="1"/>
</dbReference>
<dbReference type="PRINTS" id="PR00344">
    <property type="entry name" value="BCTRLSENSOR"/>
</dbReference>
<dbReference type="SMART" id="SM00304">
    <property type="entry name" value="HAMP"/>
    <property type="match status" value="1"/>
</dbReference>
<dbReference type="SMART" id="SM00387">
    <property type="entry name" value="HATPase_c"/>
    <property type="match status" value="1"/>
</dbReference>
<dbReference type="SMART" id="SM00388">
    <property type="entry name" value="HisKA"/>
    <property type="match status" value="1"/>
</dbReference>
<dbReference type="SUPFAM" id="SSF55874">
    <property type="entry name" value="ATPase domain of HSP90 chaperone/DNA topoisomerase II/histidine kinase"/>
    <property type="match status" value="1"/>
</dbReference>
<dbReference type="SUPFAM" id="SSF158472">
    <property type="entry name" value="HAMP domain-like"/>
    <property type="match status" value="1"/>
</dbReference>
<dbReference type="SUPFAM" id="SSF47384">
    <property type="entry name" value="Homodimeric domain of signal transducing histidine kinase"/>
    <property type="match status" value="1"/>
</dbReference>
<dbReference type="PROSITE" id="PS50885">
    <property type="entry name" value="HAMP"/>
    <property type="match status" value="1"/>
</dbReference>
<dbReference type="PROSITE" id="PS50109">
    <property type="entry name" value="HIS_KIN"/>
    <property type="match status" value="1"/>
</dbReference>
<gene>
    <name type="primary">mprB</name>
    <name type="ordered locus">ML0175</name>
    <name type="ORF">MLCB373.27</name>
</gene>
<comment type="function">
    <text evidence="1">Member of the two-component regulatory system MprB/MprA which contributes to maintaining a balance among several systems involved in stress resistance and is required for establishment and maintenance of persistent infection in the host. In response to environmental signals MprB acts both as a membrane-associated protein kinase that undergoes autophosphorylation and subsequently transfers the phosphate to MprA, and a protein phosphatase that dephosphorylates phospho-MprA (By similarity).</text>
</comment>
<comment type="catalytic activity">
    <reaction>
        <text>ATP + protein L-histidine = ADP + protein N-phospho-L-histidine.</text>
        <dbReference type="EC" id="2.7.13.3"/>
    </reaction>
</comment>
<comment type="cofactor">
    <cofactor evidence="1">
        <name>Mg(2+)</name>
        <dbReference type="ChEBI" id="CHEBI:18420"/>
    </cofactor>
    <cofactor evidence="1">
        <name>Mn(2+)</name>
        <dbReference type="ChEBI" id="CHEBI:29035"/>
    </cofactor>
</comment>
<comment type="subcellular location">
    <subcellularLocation>
        <location evidence="5">Cell membrane</location>
        <topology evidence="5">Multi-pass membrane protein</topology>
    </subcellularLocation>
</comment>
<comment type="PTM">
    <text evidence="1">Autophosphorylated.</text>
</comment>
<reference key="1">
    <citation type="journal article" date="2001" name="Nature">
        <title>Massive gene decay in the leprosy bacillus.</title>
        <authorList>
            <person name="Cole S.T."/>
            <person name="Eiglmeier K."/>
            <person name="Parkhill J."/>
            <person name="James K.D."/>
            <person name="Thomson N.R."/>
            <person name="Wheeler P.R."/>
            <person name="Honore N."/>
            <person name="Garnier T."/>
            <person name="Churcher C.M."/>
            <person name="Harris D.E."/>
            <person name="Mungall K.L."/>
            <person name="Basham D."/>
            <person name="Brown D."/>
            <person name="Chillingworth T."/>
            <person name="Connor R."/>
            <person name="Davies R.M."/>
            <person name="Devlin K."/>
            <person name="Duthoy S."/>
            <person name="Feltwell T."/>
            <person name="Fraser A."/>
            <person name="Hamlin N."/>
            <person name="Holroyd S."/>
            <person name="Hornsby T."/>
            <person name="Jagels K."/>
            <person name="Lacroix C."/>
            <person name="Maclean J."/>
            <person name="Moule S."/>
            <person name="Murphy L.D."/>
            <person name="Oliver K."/>
            <person name="Quail M.A."/>
            <person name="Rajandream M.A."/>
            <person name="Rutherford K.M."/>
            <person name="Rutter S."/>
            <person name="Seeger K."/>
            <person name="Simon S."/>
            <person name="Simmonds M."/>
            <person name="Skelton J."/>
            <person name="Squares R."/>
            <person name="Squares S."/>
            <person name="Stevens K."/>
            <person name="Taylor K."/>
            <person name="Whitehead S."/>
            <person name="Woodward J.R."/>
            <person name="Barrell B.G."/>
        </authorList>
    </citation>
    <scope>NUCLEOTIDE SEQUENCE [LARGE SCALE GENOMIC DNA]</scope>
    <source>
        <strain>TN</strain>
    </source>
</reference>
<protein>
    <recommendedName>
        <fullName>Signal transduction histidine-protein kinase/phosphatase MprB</fullName>
        <ecNumber>2.7.13.3</ecNumber>
        <ecNumber>3.1.3.-</ecNumber>
    </recommendedName>
    <alternativeName>
        <fullName>Mycobacterial persistence regulator B</fullName>
    </alternativeName>
</protein>
<feature type="chain" id="PRO_0000308434" description="Signal transduction histidine-protein kinase/phosphatase MprB">
    <location>
        <begin position="1"/>
        <end position="519"/>
    </location>
</feature>
<feature type="topological domain" description="Cytoplasmic" evidence="2">
    <location>
        <begin position="1"/>
        <end position="26"/>
    </location>
</feature>
<feature type="transmembrane region" description="Helical" evidence="2">
    <location>
        <begin position="27"/>
        <end position="47"/>
    </location>
</feature>
<feature type="topological domain" description="Extracellular" evidence="2">
    <location>
        <begin position="48"/>
        <end position="163"/>
    </location>
</feature>
<feature type="transmembrane region" description="Helical" evidence="2">
    <location>
        <begin position="164"/>
        <end position="184"/>
    </location>
</feature>
<feature type="topological domain" description="Cytoplasmic" evidence="2">
    <location>
        <begin position="185"/>
        <end position="519"/>
    </location>
</feature>
<feature type="domain" description="HAMP" evidence="3">
    <location>
        <begin position="186"/>
        <end position="238"/>
    </location>
</feature>
<feature type="domain" description="Histidine kinase" evidence="4">
    <location>
        <begin position="246"/>
        <end position="466"/>
    </location>
</feature>
<feature type="modified residue" description="Phosphohistidine; by autocatalysis" evidence="4">
    <location>
        <position position="249"/>
    </location>
</feature>
<accession>Q9Z5G7</accession>
<evidence type="ECO:0000250" key="1"/>
<evidence type="ECO:0000255" key="2"/>
<evidence type="ECO:0000255" key="3">
    <source>
        <dbReference type="PROSITE-ProRule" id="PRU00102"/>
    </source>
</evidence>
<evidence type="ECO:0000255" key="4">
    <source>
        <dbReference type="PROSITE-ProRule" id="PRU00107"/>
    </source>
</evidence>
<evidence type="ECO:0000305" key="5"/>
<keyword id="KW-0067">ATP-binding</keyword>
<keyword id="KW-1003">Cell membrane</keyword>
<keyword id="KW-0378">Hydrolase</keyword>
<keyword id="KW-0418">Kinase</keyword>
<keyword id="KW-0460">Magnesium</keyword>
<keyword id="KW-0464">Manganese</keyword>
<keyword id="KW-0472">Membrane</keyword>
<keyword id="KW-0547">Nucleotide-binding</keyword>
<keyword id="KW-0597">Phosphoprotein</keyword>
<keyword id="KW-0904">Protein phosphatase</keyword>
<keyword id="KW-1185">Reference proteome</keyword>
<keyword id="KW-0346">Stress response</keyword>
<keyword id="KW-0808">Transferase</keyword>
<keyword id="KW-0812">Transmembrane</keyword>
<keyword id="KW-1133">Transmembrane helix</keyword>
<keyword id="KW-0902">Two-component regulatory system</keyword>
<keyword id="KW-0843">Virulence</keyword>
<name>MPRB_MYCLE</name>
<organism>
    <name type="scientific">Mycobacterium leprae (strain TN)</name>
    <dbReference type="NCBI Taxonomy" id="272631"/>
    <lineage>
        <taxon>Bacteria</taxon>
        <taxon>Bacillati</taxon>
        <taxon>Actinomycetota</taxon>
        <taxon>Actinomycetes</taxon>
        <taxon>Mycobacteriales</taxon>
        <taxon>Mycobacteriaceae</taxon>
        <taxon>Mycobacterium</taxon>
    </lineage>
</organism>